<accession>C5CGE2</accession>
<evidence type="ECO:0000255" key="1">
    <source>
        <dbReference type="HAMAP-Rule" id="MF_01318"/>
    </source>
</evidence>
<evidence type="ECO:0000305" key="2"/>
<name>RL1_KOSOT</name>
<comment type="function">
    <text evidence="1">Binds directly to 23S rRNA. The L1 stalk is quite mobile in the ribosome, and is involved in E site tRNA release.</text>
</comment>
<comment type="function">
    <text evidence="1">Protein L1 is also a translational repressor protein, it controls the translation of the L11 operon by binding to its mRNA.</text>
</comment>
<comment type="subunit">
    <text evidence="1">Part of the 50S ribosomal subunit.</text>
</comment>
<comment type="similarity">
    <text evidence="1">Belongs to the universal ribosomal protein uL1 family.</text>
</comment>
<keyword id="KW-1185">Reference proteome</keyword>
<keyword id="KW-0678">Repressor</keyword>
<keyword id="KW-0687">Ribonucleoprotein</keyword>
<keyword id="KW-0689">Ribosomal protein</keyword>
<keyword id="KW-0694">RNA-binding</keyword>
<keyword id="KW-0699">rRNA-binding</keyword>
<keyword id="KW-0810">Translation regulation</keyword>
<keyword id="KW-0820">tRNA-binding</keyword>
<proteinExistence type="inferred from homology"/>
<reference key="1">
    <citation type="submission" date="2009-06" db="EMBL/GenBank/DDBJ databases">
        <title>Complete sequence of Thermotogales bacterium TBF 19.5.1.</title>
        <authorList>
            <consortium name="US DOE Joint Genome Institute"/>
            <person name="Lucas S."/>
            <person name="Copeland A."/>
            <person name="Lapidus A."/>
            <person name="Glavina del Rio T."/>
            <person name="Tice H."/>
            <person name="Bruce D."/>
            <person name="Goodwin L."/>
            <person name="Pitluck S."/>
            <person name="Chertkov O."/>
            <person name="Brettin T."/>
            <person name="Detter J.C."/>
            <person name="Han C."/>
            <person name="Schmutz J."/>
            <person name="Larimer F."/>
            <person name="Land M."/>
            <person name="Hauser L."/>
            <person name="Kyrpides N."/>
            <person name="Ovchinnikova G."/>
            <person name="Noll K."/>
        </authorList>
    </citation>
    <scope>NUCLEOTIDE SEQUENCE [LARGE SCALE GENOMIC DNA]</scope>
    <source>
        <strain>ATCC BAA-1733 / DSM 21960 / TBF 19.5.1</strain>
    </source>
</reference>
<feature type="chain" id="PRO_1000214424" description="Large ribosomal subunit protein uL1">
    <location>
        <begin position="1"/>
        <end position="231"/>
    </location>
</feature>
<gene>
    <name evidence="1" type="primary">rplA</name>
    <name type="ordered locus">Kole_1841</name>
</gene>
<protein>
    <recommendedName>
        <fullName evidence="1">Large ribosomal subunit protein uL1</fullName>
    </recommendedName>
    <alternativeName>
        <fullName evidence="2">50S ribosomal protein L1</fullName>
    </alternativeName>
</protein>
<dbReference type="EMBL" id="CP001634">
    <property type="protein sequence ID" value="ACR80523.1"/>
    <property type="molecule type" value="Genomic_DNA"/>
</dbReference>
<dbReference type="RefSeq" id="WP_015869166.1">
    <property type="nucleotide sequence ID" value="NC_012785.1"/>
</dbReference>
<dbReference type="SMR" id="C5CGE2"/>
<dbReference type="STRING" id="521045.Kole_1841"/>
<dbReference type="KEGG" id="kol:Kole_1841"/>
<dbReference type="eggNOG" id="COG0081">
    <property type="taxonomic scope" value="Bacteria"/>
</dbReference>
<dbReference type="HOGENOM" id="CLU_062853_0_0_0"/>
<dbReference type="OrthoDB" id="9803740at2"/>
<dbReference type="Proteomes" id="UP000002382">
    <property type="component" value="Chromosome"/>
</dbReference>
<dbReference type="GO" id="GO:0015934">
    <property type="term" value="C:large ribosomal subunit"/>
    <property type="evidence" value="ECO:0007669"/>
    <property type="project" value="InterPro"/>
</dbReference>
<dbReference type="GO" id="GO:0019843">
    <property type="term" value="F:rRNA binding"/>
    <property type="evidence" value="ECO:0007669"/>
    <property type="project" value="UniProtKB-UniRule"/>
</dbReference>
<dbReference type="GO" id="GO:0003735">
    <property type="term" value="F:structural constituent of ribosome"/>
    <property type="evidence" value="ECO:0007669"/>
    <property type="project" value="InterPro"/>
</dbReference>
<dbReference type="GO" id="GO:0000049">
    <property type="term" value="F:tRNA binding"/>
    <property type="evidence" value="ECO:0007669"/>
    <property type="project" value="UniProtKB-KW"/>
</dbReference>
<dbReference type="GO" id="GO:0006417">
    <property type="term" value="P:regulation of translation"/>
    <property type="evidence" value="ECO:0007669"/>
    <property type="project" value="UniProtKB-KW"/>
</dbReference>
<dbReference type="GO" id="GO:0006412">
    <property type="term" value="P:translation"/>
    <property type="evidence" value="ECO:0007669"/>
    <property type="project" value="UniProtKB-UniRule"/>
</dbReference>
<dbReference type="CDD" id="cd00403">
    <property type="entry name" value="Ribosomal_L1"/>
    <property type="match status" value="1"/>
</dbReference>
<dbReference type="FunFam" id="3.40.50.790:FF:000001">
    <property type="entry name" value="50S ribosomal protein L1"/>
    <property type="match status" value="1"/>
</dbReference>
<dbReference type="Gene3D" id="3.30.190.20">
    <property type="match status" value="1"/>
</dbReference>
<dbReference type="Gene3D" id="3.40.50.790">
    <property type="match status" value="1"/>
</dbReference>
<dbReference type="HAMAP" id="MF_01318_B">
    <property type="entry name" value="Ribosomal_uL1_B"/>
    <property type="match status" value="1"/>
</dbReference>
<dbReference type="InterPro" id="IPR005878">
    <property type="entry name" value="Ribosom_uL1_bac-type"/>
</dbReference>
<dbReference type="InterPro" id="IPR002143">
    <property type="entry name" value="Ribosomal_uL1"/>
</dbReference>
<dbReference type="InterPro" id="IPR023674">
    <property type="entry name" value="Ribosomal_uL1-like"/>
</dbReference>
<dbReference type="InterPro" id="IPR028364">
    <property type="entry name" value="Ribosomal_uL1/biogenesis"/>
</dbReference>
<dbReference type="InterPro" id="IPR016095">
    <property type="entry name" value="Ribosomal_uL1_3-a/b-sand"/>
</dbReference>
<dbReference type="InterPro" id="IPR023673">
    <property type="entry name" value="Ribosomal_uL1_CS"/>
</dbReference>
<dbReference type="NCBIfam" id="TIGR01169">
    <property type="entry name" value="rplA_bact"/>
    <property type="match status" value="1"/>
</dbReference>
<dbReference type="PANTHER" id="PTHR36427">
    <property type="entry name" value="54S RIBOSOMAL PROTEIN L1, MITOCHONDRIAL"/>
    <property type="match status" value="1"/>
</dbReference>
<dbReference type="PANTHER" id="PTHR36427:SF3">
    <property type="entry name" value="LARGE RIBOSOMAL SUBUNIT PROTEIN UL1M"/>
    <property type="match status" value="1"/>
</dbReference>
<dbReference type="Pfam" id="PF00687">
    <property type="entry name" value="Ribosomal_L1"/>
    <property type="match status" value="1"/>
</dbReference>
<dbReference type="PIRSF" id="PIRSF002155">
    <property type="entry name" value="Ribosomal_L1"/>
    <property type="match status" value="1"/>
</dbReference>
<dbReference type="SUPFAM" id="SSF56808">
    <property type="entry name" value="Ribosomal protein L1"/>
    <property type="match status" value="1"/>
</dbReference>
<dbReference type="PROSITE" id="PS01199">
    <property type="entry name" value="RIBOSOMAL_L1"/>
    <property type="match status" value="1"/>
</dbReference>
<sequence length="231" mass="25345">MPKRSKRYLEARKLVDRTKAYTIDEAIELLKQMPSAKFDESIELHIKTGIEPSKSDQQVRGTISLPHGTGKNVKVLVFTRGEKVEEAKAAGADFVGSDELIQQIQKGWTDFDVAIATPDMMREIGRLGRILGPRGLMPSPKAGTVTTDVAEAVKAFKAGRVEIKNDKTGNLHFPIGKKSFDSEKLKENLVSALEQISKMKPAAAKGRFIVKVVVAPTMGPGIKLDHQKVVE</sequence>
<organism>
    <name type="scientific">Kosmotoga olearia (strain ATCC BAA-1733 / DSM 21960 / TBF 19.5.1)</name>
    <dbReference type="NCBI Taxonomy" id="521045"/>
    <lineage>
        <taxon>Bacteria</taxon>
        <taxon>Thermotogati</taxon>
        <taxon>Thermotogota</taxon>
        <taxon>Thermotogae</taxon>
        <taxon>Kosmotogales</taxon>
        <taxon>Kosmotogaceae</taxon>
        <taxon>Kosmotoga</taxon>
    </lineage>
</organism>